<accession>A0A023PZF9</accession>
<comment type="subcellular location">
    <subcellularLocation>
        <location evidence="1">Membrane</location>
        <topology evidence="1">Single-pass membrane protein</topology>
    </subcellularLocation>
</comment>
<comment type="miscellaneous">
    <text evidence="2">Partially overlaps DAL81.</text>
</comment>
<comment type="caution">
    <text evidence="3">Product of a dubious gene prediction unlikely to encode a functional protein. Because of that it is not part of the S.cerevisiae S288c complete/reference proteome set.</text>
</comment>
<protein>
    <recommendedName>
        <fullName evidence="2">Putative uncharacterized membrane protein YIR023C-A</fullName>
    </recommendedName>
</protein>
<reference key="1">
    <citation type="journal article" date="1997" name="Nature">
        <title>The nucleotide sequence of Saccharomyces cerevisiae chromosome IX.</title>
        <authorList>
            <person name="Churcher C.M."/>
            <person name="Bowman S."/>
            <person name="Badcock K."/>
            <person name="Bankier A.T."/>
            <person name="Brown D."/>
            <person name="Chillingworth T."/>
            <person name="Connor R."/>
            <person name="Devlin K."/>
            <person name="Gentles S."/>
            <person name="Hamlin N."/>
            <person name="Harris D.E."/>
            <person name="Horsnell T."/>
            <person name="Hunt S."/>
            <person name="Jagels K."/>
            <person name="Jones M."/>
            <person name="Lye G."/>
            <person name="Moule S."/>
            <person name="Odell C."/>
            <person name="Pearson D."/>
            <person name="Rajandream M.A."/>
            <person name="Rice P."/>
            <person name="Rowley N."/>
            <person name="Skelton J."/>
            <person name="Smith V."/>
            <person name="Walsh S.V."/>
            <person name="Whitehead S."/>
            <person name="Barrell B.G."/>
        </authorList>
    </citation>
    <scope>NUCLEOTIDE SEQUENCE [LARGE SCALE GENOMIC DNA]</scope>
    <source>
        <strain>ATCC 204508 / S288c</strain>
    </source>
</reference>
<reference key="2">
    <citation type="journal article" date="2014" name="G3 (Bethesda)">
        <title>The reference genome sequence of Saccharomyces cerevisiae: Then and now.</title>
        <authorList>
            <person name="Engel S.R."/>
            <person name="Dietrich F.S."/>
            <person name="Fisk D.G."/>
            <person name="Binkley G."/>
            <person name="Balakrishnan R."/>
            <person name="Costanzo M.C."/>
            <person name="Dwight S.S."/>
            <person name="Hitz B.C."/>
            <person name="Karra K."/>
            <person name="Nash R.S."/>
            <person name="Weng S."/>
            <person name="Wong E.D."/>
            <person name="Lloyd P."/>
            <person name="Skrzypek M.S."/>
            <person name="Miyasato S.R."/>
            <person name="Simison M."/>
            <person name="Cherry J.M."/>
        </authorList>
    </citation>
    <scope>GENOME REANNOTATION</scope>
    <source>
        <strain>ATCC 204508 / S288c</strain>
    </source>
</reference>
<proteinExistence type="uncertain"/>
<name>YI023_YEAST</name>
<keyword id="KW-0472">Membrane</keyword>
<keyword id="KW-0812">Transmembrane</keyword>
<keyword id="KW-1133">Transmembrane helix</keyword>
<feature type="chain" id="PRO_0000431030" description="Putative uncharacterized membrane protein YIR023C-A">
    <location>
        <begin position="1"/>
        <end position="107"/>
    </location>
</feature>
<feature type="transmembrane region" description="Helical" evidence="1">
    <location>
        <begin position="13"/>
        <end position="33"/>
    </location>
</feature>
<evidence type="ECO:0000255" key="1"/>
<evidence type="ECO:0000305" key="2"/>
<evidence type="ECO:0000305" key="3">
    <source>
    </source>
</evidence>
<evidence type="ECO:0000312" key="4">
    <source>
        <dbReference type="SGD" id="S000028801"/>
    </source>
</evidence>
<sequence length="107" mass="11613">MCYYLYYRGVSLVLIVTFLSSFIFIVWLPVALVSWFEFGLSSLSSVDDSSLAVLSLPAVFSSAASPDSCLVSLIEVKGEAFICVLELTFVLELTLGEDVLEGGCLLI</sequence>
<organism>
    <name type="scientific">Saccharomyces cerevisiae (strain ATCC 204508 / S288c)</name>
    <name type="common">Baker's yeast</name>
    <dbReference type="NCBI Taxonomy" id="559292"/>
    <lineage>
        <taxon>Eukaryota</taxon>
        <taxon>Fungi</taxon>
        <taxon>Dikarya</taxon>
        <taxon>Ascomycota</taxon>
        <taxon>Saccharomycotina</taxon>
        <taxon>Saccharomycetes</taxon>
        <taxon>Saccharomycetales</taxon>
        <taxon>Saccharomycetaceae</taxon>
        <taxon>Saccharomyces</taxon>
    </lineage>
</organism>
<dbReference type="EMBL" id="KJ412278">
    <property type="protein sequence ID" value="AHX39321.1"/>
    <property type="molecule type" value="Genomic_DNA"/>
</dbReference>
<dbReference type="PaxDb" id="4932-YIR023C-A"/>
<dbReference type="EnsemblFungi" id="YIR023C-A_mRNA">
    <property type="protein sequence ID" value="YIR023C-A"/>
    <property type="gene ID" value="YIR023C-A"/>
</dbReference>
<dbReference type="AGR" id="SGD:S000028801"/>
<dbReference type="SGD" id="S000028801">
    <property type="gene designation" value="YIR023C-A"/>
</dbReference>
<dbReference type="HOGENOM" id="CLU_2212014_0_0_1"/>
<dbReference type="GO" id="GO:0016020">
    <property type="term" value="C:membrane"/>
    <property type="evidence" value="ECO:0007669"/>
    <property type="project" value="UniProtKB-SubCell"/>
</dbReference>
<gene>
    <name evidence="4" type="ordered locus">YIR023C-A</name>
</gene>